<evidence type="ECO:0000255" key="1">
    <source>
        <dbReference type="HAMAP-Rule" id="MF_00298"/>
    </source>
</evidence>
<sequence>MIDSDGFRANVGIIICNRSGQVMWARRFGQHSWQFPQGGVDEGESAEEAMYRELYEEVGLRPEHVQILASTRSWLRYRLPKRLIRQDSKPVCIGQKQKWFLLQLKSSENAIDLNACGHPEFDDWRWVSYWYPVRQVVSFKRDVYRKVMKEFAPTTLPLQVKESNHKRRGMRRN</sequence>
<proteinExistence type="inferred from homology"/>
<comment type="function">
    <text evidence="1">Accelerates the degradation of transcripts by removing pyrophosphate from the 5'-end of triphosphorylated RNA, leading to a more labile monophosphorylated state that can stimulate subsequent ribonuclease cleavage.</text>
</comment>
<comment type="cofactor">
    <cofactor evidence="1">
        <name>a divalent metal cation</name>
        <dbReference type="ChEBI" id="CHEBI:60240"/>
    </cofactor>
</comment>
<comment type="similarity">
    <text evidence="1">Belongs to the Nudix hydrolase family. RppH subfamily.</text>
</comment>
<keyword id="KW-0378">Hydrolase</keyword>
<accession>B8CQL0</accession>
<gene>
    <name evidence="1" type="primary">rppH</name>
    <name evidence="1" type="synonym">nudH</name>
    <name type="ordered locus">swp_3796</name>
</gene>
<feature type="chain" id="PRO_1000119477" description="RNA pyrophosphohydrolase">
    <location>
        <begin position="1"/>
        <end position="173"/>
    </location>
</feature>
<feature type="domain" description="Nudix hydrolase" evidence="1">
    <location>
        <begin position="6"/>
        <end position="149"/>
    </location>
</feature>
<feature type="short sequence motif" description="Nudix box">
    <location>
        <begin position="38"/>
        <end position="59"/>
    </location>
</feature>
<protein>
    <recommendedName>
        <fullName evidence="1">RNA pyrophosphohydrolase</fullName>
        <ecNumber evidence="1">3.6.1.-</ecNumber>
    </recommendedName>
    <alternativeName>
        <fullName evidence="1">(Di)nucleoside polyphosphate hydrolase</fullName>
    </alternativeName>
</protein>
<organism>
    <name type="scientific">Shewanella piezotolerans (strain WP3 / JCM 13877)</name>
    <dbReference type="NCBI Taxonomy" id="225849"/>
    <lineage>
        <taxon>Bacteria</taxon>
        <taxon>Pseudomonadati</taxon>
        <taxon>Pseudomonadota</taxon>
        <taxon>Gammaproteobacteria</taxon>
        <taxon>Alteromonadales</taxon>
        <taxon>Shewanellaceae</taxon>
        <taxon>Shewanella</taxon>
    </lineage>
</organism>
<reference key="1">
    <citation type="journal article" date="2008" name="PLoS ONE">
        <title>Environmental adaptation: genomic analysis of the piezotolerant and psychrotolerant deep-sea iron reducing bacterium Shewanella piezotolerans WP3.</title>
        <authorList>
            <person name="Wang F."/>
            <person name="Wang J."/>
            <person name="Jian H."/>
            <person name="Zhang B."/>
            <person name="Li S."/>
            <person name="Wang F."/>
            <person name="Zeng X."/>
            <person name="Gao L."/>
            <person name="Bartlett D.H."/>
            <person name="Yu J."/>
            <person name="Hu S."/>
            <person name="Xiao X."/>
        </authorList>
    </citation>
    <scope>NUCLEOTIDE SEQUENCE [LARGE SCALE GENOMIC DNA]</scope>
    <source>
        <strain>WP3 / JCM 13877</strain>
    </source>
</reference>
<name>RPPH_SHEPW</name>
<dbReference type="EC" id="3.6.1.-" evidence="1"/>
<dbReference type="EMBL" id="CP000472">
    <property type="protein sequence ID" value="ACJ30476.1"/>
    <property type="molecule type" value="Genomic_DNA"/>
</dbReference>
<dbReference type="RefSeq" id="WP_020913819.1">
    <property type="nucleotide sequence ID" value="NC_011566.1"/>
</dbReference>
<dbReference type="SMR" id="B8CQL0"/>
<dbReference type="STRING" id="225849.swp_3796"/>
<dbReference type="KEGG" id="swp:swp_3796"/>
<dbReference type="eggNOG" id="COG0494">
    <property type="taxonomic scope" value="Bacteria"/>
</dbReference>
<dbReference type="HOGENOM" id="CLU_087195_3_1_6"/>
<dbReference type="OrthoDB" id="9816040at2"/>
<dbReference type="Proteomes" id="UP000000753">
    <property type="component" value="Chromosome"/>
</dbReference>
<dbReference type="GO" id="GO:0005737">
    <property type="term" value="C:cytoplasm"/>
    <property type="evidence" value="ECO:0007669"/>
    <property type="project" value="TreeGrafter"/>
</dbReference>
<dbReference type="GO" id="GO:0034353">
    <property type="term" value="F:mRNA 5'-diphosphatase activity"/>
    <property type="evidence" value="ECO:0007669"/>
    <property type="project" value="TreeGrafter"/>
</dbReference>
<dbReference type="GO" id="GO:0006402">
    <property type="term" value="P:mRNA catabolic process"/>
    <property type="evidence" value="ECO:0007669"/>
    <property type="project" value="TreeGrafter"/>
</dbReference>
<dbReference type="CDD" id="cd03671">
    <property type="entry name" value="NUDIX_Ap4A_hydrolase_plant_like"/>
    <property type="match status" value="1"/>
</dbReference>
<dbReference type="FunFam" id="3.90.79.10:FF:000001">
    <property type="entry name" value="RNA pyrophosphohydrolase"/>
    <property type="match status" value="1"/>
</dbReference>
<dbReference type="Gene3D" id="3.90.79.10">
    <property type="entry name" value="Nucleoside Triphosphate Pyrophosphohydrolase"/>
    <property type="match status" value="1"/>
</dbReference>
<dbReference type="HAMAP" id="MF_00298">
    <property type="entry name" value="Nudix_RppH"/>
    <property type="match status" value="1"/>
</dbReference>
<dbReference type="InterPro" id="IPR020476">
    <property type="entry name" value="Nudix_hydrolase"/>
</dbReference>
<dbReference type="InterPro" id="IPR015797">
    <property type="entry name" value="NUDIX_hydrolase-like_dom_sf"/>
</dbReference>
<dbReference type="InterPro" id="IPR020084">
    <property type="entry name" value="NUDIX_hydrolase_CS"/>
</dbReference>
<dbReference type="InterPro" id="IPR000086">
    <property type="entry name" value="NUDIX_hydrolase_dom"/>
</dbReference>
<dbReference type="InterPro" id="IPR022927">
    <property type="entry name" value="RppH"/>
</dbReference>
<dbReference type="NCBIfam" id="NF001934">
    <property type="entry name" value="PRK00714.1-1"/>
    <property type="match status" value="1"/>
</dbReference>
<dbReference type="NCBIfam" id="NF001937">
    <property type="entry name" value="PRK00714.1-4"/>
    <property type="match status" value="1"/>
</dbReference>
<dbReference type="NCBIfam" id="NF001938">
    <property type="entry name" value="PRK00714.1-5"/>
    <property type="match status" value="1"/>
</dbReference>
<dbReference type="PANTHER" id="PTHR23114">
    <property type="entry name" value="M7GPPPN-MRNA HYDROLASE"/>
    <property type="match status" value="1"/>
</dbReference>
<dbReference type="PANTHER" id="PTHR23114:SF17">
    <property type="entry name" value="M7GPPPN-MRNA HYDROLASE"/>
    <property type="match status" value="1"/>
</dbReference>
<dbReference type="Pfam" id="PF00293">
    <property type="entry name" value="NUDIX"/>
    <property type="match status" value="1"/>
</dbReference>
<dbReference type="PRINTS" id="PR00502">
    <property type="entry name" value="NUDIXFAMILY"/>
</dbReference>
<dbReference type="SUPFAM" id="SSF55811">
    <property type="entry name" value="Nudix"/>
    <property type="match status" value="1"/>
</dbReference>
<dbReference type="PROSITE" id="PS51462">
    <property type="entry name" value="NUDIX"/>
    <property type="match status" value="1"/>
</dbReference>
<dbReference type="PROSITE" id="PS00893">
    <property type="entry name" value="NUDIX_BOX"/>
    <property type="match status" value="1"/>
</dbReference>